<organism>
    <name type="scientific">Escherichia coli</name>
    <dbReference type="NCBI Taxonomy" id="562"/>
    <lineage>
        <taxon>Bacteria</taxon>
        <taxon>Pseudomonadati</taxon>
        <taxon>Pseudomonadota</taxon>
        <taxon>Gammaproteobacteria</taxon>
        <taxon>Enterobacterales</taxon>
        <taxon>Enterobacteriaceae</taxon>
        <taxon>Escherichia</taxon>
    </lineage>
</organism>
<gene>
    <name type="primary">incC</name>
</gene>
<accession>P07673</accession>
<evidence type="ECO:0000256" key="1">
    <source>
        <dbReference type="SAM" id="MobiDB-lite"/>
    </source>
</evidence>
<evidence type="ECO:0000305" key="2"/>
<reference key="1">
    <citation type="journal article" date="1986" name="Nucleic Acids Res.">
        <title>The trfB region of broad host range plasmid RK2: the nucleotide sequence reveals incC and key regulatory gene trfB/korA/korD as overlapping genes.</title>
        <authorList>
            <person name="Thomas C.M."/>
            <person name="Smith C.A."/>
        </authorList>
    </citation>
    <scope>NUCLEOTIDE SEQUENCE [GENOMIC DNA]</scope>
</reference>
<reference key="2">
    <citation type="journal article" date="1987" name="Nucleic Acids Res.">
        <title>Nucleotide sequence of the transcriptional repressor gene korB which plays a key role in regulation of the copy number of broad host range plasmid RK2.</title>
        <authorList>
            <person name="Theophilus B.D.B."/>
            <person name="Thomas C.M."/>
        </authorList>
    </citation>
    <scope>NUCLEOTIDE SEQUENCE [GENOMIC DNA] OF 330-364</scope>
</reference>
<reference key="3">
    <citation type="journal article" date="1987" name="J. Mol. Biol.">
        <title>Nucleotide sequence of korB, a replication control gene of broad host-range plasmid RK2.</title>
        <authorList>
            <person name="Kornacki J.A."/>
            <person name="Balderes P.J."/>
            <person name="Figurski D.H."/>
        </authorList>
    </citation>
    <scope>NUCLEOTIDE SEQUENCE [GENOMIC DNA] OF 342-364</scope>
</reference>
<name>INCC2_ECOLX</name>
<sequence>MGVIHEETAYRKPVPGGDPGAGSGAADHRDSAGRLSRWEATGDVRNVAGTDQGRSVASGASRVGRVRGQELARGVRAGNGGSAGTSGVHRPEVGSGRQEKTGNQTMKTLVTANQKGGVGKTSTLVHLAFDFFERGLRVAVIDLDPQGNASYTLKDFATGLHASKLFGAVPAGGWTETAPAAGDGQAARLALIESNPVLANAERLSLDDARELFGANIKALANQGFDVCLIDTAPTLGVGLAAALFAADYVLSPIELEAYSIQGIKKMVTTIANVRQKNAKLQFLGMVPSKVDARNPRHARHQAELLAAYPKMMIPATVGLRSSIADALASGVPVWKIKKTAARKASKEVRALADYVFTKMEISQ</sequence>
<comment type="function">
    <text>This is one of the proteins encoded by the trfB operon; it is involved in plasmid maintenance and replication.</text>
</comment>
<comment type="alternative products">
    <event type="alternative initiation"/>
    <isoform>
        <id>P07673-1</id>
        <name>Long</name>
        <sequence type="displayed"/>
    </isoform>
    <isoform>
        <id>P07673-2</id>
        <name>Short</name>
        <name>Small</name>
        <sequence type="described" ref="VSP_018860"/>
    </isoform>
</comment>
<comment type="similarity">
    <text evidence="2">Belongs to the ParA family.</text>
</comment>
<proteinExistence type="inferred from homology"/>
<geneLocation type="plasmid">
    <name>IncP-alpha RK2</name>
</geneLocation>
<dbReference type="EMBL" id="X03962">
    <property type="protein sequence ID" value="CAA27595.1"/>
    <property type="molecule type" value="Genomic_DNA"/>
</dbReference>
<dbReference type="EMBL" id="Y00448">
    <property type="protein sequence ID" value="CAA68502.1"/>
    <property type="molecule type" value="Genomic_DNA"/>
</dbReference>
<dbReference type="EMBL" id="X06543">
    <property type="protein sequence ID" value="CAA29789.1"/>
    <property type="molecule type" value="Genomic_DNA"/>
</dbReference>
<dbReference type="BMRB" id="P07673"/>
<dbReference type="SMR" id="P07673"/>
<dbReference type="DIP" id="DIP-17008N"/>
<dbReference type="GO" id="GO:0006260">
    <property type="term" value="P:DNA replication"/>
    <property type="evidence" value="ECO:0007669"/>
    <property type="project" value="UniProtKB-KW"/>
</dbReference>
<dbReference type="CDD" id="cd02042">
    <property type="entry name" value="ParAB_family"/>
    <property type="match status" value="1"/>
</dbReference>
<dbReference type="Gene3D" id="3.40.50.300">
    <property type="entry name" value="P-loop containing nucleotide triphosphate hydrolases"/>
    <property type="match status" value="1"/>
</dbReference>
<dbReference type="InterPro" id="IPR025669">
    <property type="entry name" value="AAA_dom"/>
</dbReference>
<dbReference type="InterPro" id="IPR050678">
    <property type="entry name" value="DNA_Partitioning_ATPase"/>
</dbReference>
<dbReference type="InterPro" id="IPR027417">
    <property type="entry name" value="P-loop_NTPase"/>
</dbReference>
<dbReference type="PANTHER" id="PTHR13696:SF99">
    <property type="entry name" value="COBYRINIC ACID AC-DIAMIDE SYNTHASE"/>
    <property type="match status" value="1"/>
</dbReference>
<dbReference type="PANTHER" id="PTHR13696">
    <property type="entry name" value="P-LOOP CONTAINING NUCLEOSIDE TRIPHOSPHATE HYDROLASE"/>
    <property type="match status" value="1"/>
</dbReference>
<dbReference type="Pfam" id="PF13614">
    <property type="entry name" value="AAA_31"/>
    <property type="match status" value="1"/>
</dbReference>
<dbReference type="SUPFAM" id="SSF52540">
    <property type="entry name" value="P-loop containing nucleoside triphosphate hydrolases"/>
    <property type="match status" value="1"/>
</dbReference>
<keyword id="KW-0024">Alternative initiation</keyword>
<keyword id="KW-0235">DNA replication</keyword>
<keyword id="KW-0614">Plasmid</keyword>
<protein>
    <recommendedName>
        <fullName>Protein IncC</fullName>
    </recommendedName>
</protein>
<feature type="chain" id="PRO_0000024483" description="Protein IncC">
    <location>
        <begin position="1"/>
        <end position="364"/>
    </location>
</feature>
<feature type="region of interest" description="Disordered" evidence="1">
    <location>
        <begin position="1"/>
        <end position="63"/>
    </location>
</feature>
<feature type="region of interest" description="Disordered" evidence="1">
    <location>
        <begin position="75"/>
        <end position="102"/>
    </location>
</feature>
<feature type="compositionally biased region" description="Basic and acidic residues" evidence="1">
    <location>
        <begin position="1"/>
        <end position="10"/>
    </location>
</feature>
<feature type="compositionally biased region" description="Basic and acidic residues" evidence="1">
    <location>
        <begin position="26"/>
        <end position="42"/>
    </location>
</feature>
<feature type="compositionally biased region" description="Basic and acidic residues" evidence="1">
    <location>
        <begin position="89"/>
        <end position="100"/>
    </location>
</feature>
<feature type="splice variant" id="VSP_018860" description="In isoform Short." evidence="2">
    <location>
        <begin position="1"/>
        <end position="105"/>
    </location>
</feature>